<name>UB4AB_SALSA</name>
<reference key="1">
    <citation type="journal article" date="2010" name="BMC Genomics">
        <title>Salmo salar and Esox lucius full-length cDNA sequences reveal changes in evolutionary pressures on a post-tetraploidization genome.</title>
        <authorList>
            <person name="Leong J.S."/>
            <person name="Jantzen S.G."/>
            <person name="von Schalburg K.R."/>
            <person name="Cooper G.A."/>
            <person name="Messmer A.M."/>
            <person name="Liao N.Y."/>
            <person name="Munro S."/>
            <person name="Moore R."/>
            <person name="Holt R.A."/>
            <person name="Jones S.J."/>
            <person name="Davidson W.S."/>
            <person name="Koop B.F."/>
        </authorList>
    </citation>
    <scope>NUCLEOTIDE SEQUENCE [LARGE SCALE MRNA]</scope>
    <source>
        <tissue>Thymus</tissue>
        <tissue>Thyroid</tissue>
    </source>
</reference>
<keyword id="KW-0963">Cytoplasm</keyword>
<keyword id="KW-1185">Reference proteome</keyword>
<keyword id="KW-0813">Transport</keyword>
<dbReference type="EMBL" id="BT047798">
    <property type="protein sequence ID" value="ACI67599.1"/>
    <property type="molecule type" value="mRNA"/>
</dbReference>
<dbReference type="EMBL" id="BT049228">
    <property type="protein sequence ID" value="ACI69029.1"/>
    <property type="molecule type" value="mRNA"/>
</dbReference>
<dbReference type="SMR" id="B5X9S9"/>
<dbReference type="Ensembl" id="ENSSSAT00020145490">
    <property type="protein sequence ID" value="ENSSSAP00020111635"/>
    <property type="gene ID" value="ENSSSAG00020063194"/>
</dbReference>
<dbReference type="Ensembl" id="ENSSSAT00070064535">
    <property type="protein sequence ID" value="ENSSSAP00070061883"/>
    <property type="gene ID" value="ENSSSAG00070040149"/>
</dbReference>
<dbReference type="Ensembl" id="ENSSSAT00075098361">
    <property type="protein sequence ID" value="ENSSSAP00075071793"/>
    <property type="gene ID" value="ENSSSAG00075046848"/>
</dbReference>
<dbReference type="GeneID" id="106579850"/>
<dbReference type="KEGG" id="sasa:106579850"/>
<dbReference type="OMA" id="RGFRKFY"/>
<dbReference type="OrthoDB" id="409927at7898"/>
<dbReference type="Proteomes" id="UP000087266">
    <property type="component" value="Chromosome ssa20"/>
</dbReference>
<dbReference type="Bgee" id="ENSSSAG00000049676">
    <property type="expression patterns" value="Expressed in eye and 26 other cell types or tissues"/>
</dbReference>
<dbReference type="GO" id="GO:0071818">
    <property type="term" value="C:BAT3 complex"/>
    <property type="evidence" value="ECO:0000250"/>
    <property type="project" value="UniProtKB"/>
</dbReference>
<dbReference type="GO" id="GO:0005829">
    <property type="term" value="C:cytosol"/>
    <property type="evidence" value="ECO:0000250"/>
    <property type="project" value="UniProtKB"/>
</dbReference>
<dbReference type="GO" id="GO:0051087">
    <property type="term" value="F:protein-folding chaperone binding"/>
    <property type="evidence" value="ECO:0007669"/>
    <property type="project" value="TreeGrafter"/>
</dbReference>
<dbReference type="GO" id="GO:0006620">
    <property type="term" value="P:post-translational protein targeting to endoplasmic reticulum membrane"/>
    <property type="evidence" value="ECO:0007669"/>
    <property type="project" value="InterPro"/>
</dbReference>
<dbReference type="GO" id="GO:0071816">
    <property type="term" value="P:tail-anchored membrane protein insertion into ER membrane"/>
    <property type="evidence" value="ECO:0000250"/>
    <property type="project" value="UniProtKB"/>
</dbReference>
<dbReference type="CDD" id="cd01807">
    <property type="entry name" value="Ubl_UBL4A_like"/>
    <property type="match status" value="1"/>
</dbReference>
<dbReference type="FunFam" id="3.10.20.90:FF:000144">
    <property type="entry name" value="Ubiquitin-like protein 4A"/>
    <property type="match status" value="1"/>
</dbReference>
<dbReference type="Gene3D" id="3.10.20.90">
    <property type="entry name" value="Phosphatidylinositol 3-kinase Catalytic Subunit, Chain A, domain 1"/>
    <property type="match status" value="1"/>
</dbReference>
<dbReference type="InterPro" id="IPR000626">
    <property type="entry name" value="Ubiquitin-like_dom"/>
</dbReference>
<dbReference type="InterPro" id="IPR029071">
    <property type="entry name" value="Ubiquitin-like_domsf"/>
</dbReference>
<dbReference type="InterPro" id="IPR019954">
    <property type="entry name" value="Ubiquitin_CS"/>
</dbReference>
<dbReference type="InterPro" id="IPR019956">
    <property type="entry name" value="Ubiquitin_dom"/>
</dbReference>
<dbReference type="InterPro" id="IPR041421">
    <property type="entry name" value="Ubl4_C_TUGS"/>
</dbReference>
<dbReference type="InterPro" id="IPR047154">
    <property type="entry name" value="UBL4A-like"/>
</dbReference>
<dbReference type="InterPro" id="IPR044724">
    <property type="entry name" value="Ubl_UBL4A-like"/>
</dbReference>
<dbReference type="PANTHER" id="PTHR46555">
    <property type="entry name" value="UBIQUITIN-LIKE PROTEIN 4A"/>
    <property type="match status" value="1"/>
</dbReference>
<dbReference type="PANTHER" id="PTHR46555:SF1">
    <property type="entry name" value="UBIQUITIN-LIKE PROTEIN 4A"/>
    <property type="match status" value="1"/>
</dbReference>
<dbReference type="Pfam" id="PF17840">
    <property type="entry name" value="Tugs"/>
    <property type="match status" value="1"/>
</dbReference>
<dbReference type="Pfam" id="PF00240">
    <property type="entry name" value="ubiquitin"/>
    <property type="match status" value="1"/>
</dbReference>
<dbReference type="PRINTS" id="PR00348">
    <property type="entry name" value="UBIQUITIN"/>
</dbReference>
<dbReference type="SMART" id="SM00213">
    <property type="entry name" value="UBQ"/>
    <property type="match status" value="1"/>
</dbReference>
<dbReference type="SUPFAM" id="SSF54236">
    <property type="entry name" value="Ubiquitin-like"/>
    <property type="match status" value="1"/>
</dbReference>
<dbReference type="PROSITE" id="PS00299">
    <property type="entry name" value="UBIQUITIN_1"/>
    <property type="match status" value="1"/>
</dbReference>
<dbReference type="PROSITE" id="PS50053">
    <property type="entry name" value="UBIQUITIN_2"/>
    <property type="match status" value="1"/>
</dbReference>
<accession>B5X9S9</accession>
<feature type="chain" id="PRO_0000403747" description="Ubiquitin-like protein 4A-B">
    <location>
        <begin position="1"/>
        <end position="151"/>
    </location>
</feature>
<feature type="domain" description="Ubiquitin-like" evidence="2">
    <location>
        <begin position="1"/>
        <end position="76"/>
    </location>
</feature>
<protein>
    <recommendedName>
        <fullName>Ubiquitin-like protein 4A-B</fullName>
    </recommendedName>
</protein>
<proteinExistence type="evidence at transcript level"/>
<sequence>MILTIKPLQGKECNVQVTEDEKVSMVKELVSERLNIPANQQRLLYKGKALADEHRLSDYSIGPEAKLNLVVRPAGERSGMASSSSAVSGVWQTLSTVLAKHFSPADAAKVQEQLVKDYERSLRQLSLDDIERLAGRLLHPDSEGMDTSYMD</sequence>
<comment type="function">
    <text evidence="1">Component of the BAT3 complex, a multiprotein complex involved in the post-translational delivery of tail-anchored (TA) membrane proteins to the endoplasmic reticulum membrane. TA membrane proteins, also named type II transmembrane proteins, contain a single C-terminal transmembrane region (By similarity).</text>
</comment>
<comment type="subunit">
    <text evidence="1">Component of the BAT3 complex.</text>
</comment>
<comment type="subcellular location">
    <subcellularLocation>
        <location evidence="1">Cytoplasm</location>
        <location evidence="1">Cytosol</location>
    </subcellularLocation>
</comment>
<organism>
    <name type="scientific">Salmo salar</name>
    <name type="common">Atlantic salmon</name>
    <dbReference type="NCBI Taxonomy" id="8030"/>
    <lineage>
        <taxon>Eukaryota</taxon>
        <taxon>Metazoa</taxon>
        <taxon>Chordata</taxon>
        <taxon>Craniata</taxon>
        <taxon>Vertebrata</taxon>
        <taxon>Euteleostomi</taxon>
        <taxon>Actinopterygii</taxon>
        <taxon>Neopterygii</taxon>
        <taxon>Teleostei</taxon>
        <taxon>Protacanthopterygii</taxon>
        <taxon>Salmoniformes</taxon>
        <taxon>Salmonidae</taxon>
        <taxon>Salmoninae</taxon>
        <taxon>Salmo</taxon>
    </lineage>
</organism>
<evidence type="ECO:0000250" key="1"/>
<evidence type="ECO:0000255" key="2">
    <source>
        <dbReference type="PROSITE-ProRule" id="PRU00214"/>
    </source>
</evidence>
<gene>
    <name type="primary">ubl4ab</name>
</gene>